<accession>P12528</accession>
<accession>Q7PCJ1</accession>
<organism>
    <name type="scientific">Salmonella phage P22</name>
    <name type="common">Bacteriophage P22</name>
    <dbReference type="NCBI Taxonomy" id="10754"/>
    <lineage>
        <taxon>Viruses</taxon>
        <taxon>Duplodnaviria</taxon>
        <taxon>Heunggongvirae</taxon>
        <taxon>Uroviricota</taxon>
        <taxon>Caudoviricetes</taxon>
        <taxon>Lederbergvirus</taxon>
    </lineage>
</organism>
<keyword id="KW-0002">3D-structure</keyword>
<keyword id="KW-1235">Degradation of host cell envelope components during virus entry</keyword>
<keyword id="KW-1237">Degradation of host lipopolysaccharides during virus entry</keyword>
<keyword id="KW-0903">Direct protein sequencing</keyword>
<keyword id="KW-0326">Glycosidase</keyword>
<keyword id="KW-0945">Host-virus interaction</keyword>
<keyword id="KW-0378">Hydrolase</keyword>
<keyword id="KW-0426">Late protein</keyword>
<keyword id="KW-1185">Reference proteome</keyword>
<keyword id="KW-1233">Viral attachment to host adhesion receptor</keyword>
<keyword id="KW-1161">Viral attachment to host cell</keyword>
<keyword id="KW-1230">Viral tail fiber protein</keyword>
<keyword id="KW-1227">Viral tail protein</keyword>
<keyword id="KW-0946">Virion</keyword>
<keyword id="KW-1160">Virus entry into host cell</keyword>
<dbReference type="EC" id="3.2.1.-" evidence="4 7"/>
<dbReference type="EMBL" id="J02473">
    <property type="status" value="NOT_ANNOTATED_CDS"/>
    <property type="molecule type" value="Genomic_DNA"/>
</dbReference>
<dbReference type="EMBL" id="AF217253">
    <property type="protein sequence ID" value="AAF75060.1"/>
    <property type="molecule type" value="Genomic_DNA"/>
</dbReference>
<dbReference type="EMBL" id="BK000583">
    <property type="protein sequence ID" value="DAA00981.1"/>
    <property type="molecule type" value="Genomic_DNA"/>
</dbReference>
<dbReference type="PIR" id="A18750">
    <property type="entry name" value="TLBP22"/>
</dbReference>
<dbReference type="RefSeq" id="NP_059644.1">
    <property type="nucleotide sequence ID" value="NC_002371.2"/>
</dbReference>
<dbReference type="PDB" id="1CLW">
    <property type="method" value="X-ray"/>
    <property type="resolution" value="2.00 A"/>
    <property type="chains" value="A=114-667"/>
</dbReference>
<dbReference type="PDB" id="1LKT">
    <property type="method" value="X-ray"/>
    <property type="resolution" value="2.60 A"/>
    <property type="chains" value="A/B/C/D/E/F=6-109"/>
</dbReference>
<dbReference type="PDB" id="1QA1">
    <property type="method" value="X-ray"/>
    <property type="resolution" value="2.00 A"/>
    <property type="chains" value="A=114-667"/>
</dbReference>
<dbReference type="PDB" id="1QA2">
    <property type="method" value="X-ray"/>
    <property type="resolution" value="2.00 A"/>
    <property type="chains" value="A=114-667"/>
</dbReference>
<dbReference type="PDB" id="1QA3">
    <property type="method" value="X-ray"/>
    <property type="resolution" value="2.00 A"/>
    <property type="chains" value="A=114-667"/>
</dbReference>
<dbReference type="PDB" id="1QQ1">
    <property type="method" value="X-ray"/>
    <property type="resolution" value="1.80 A"/>
    <property type="chains" value="A=109-667"/>
</dbReference>
<dbReference type="PDB" id="1QRB">
    <property type="method" value="X-ray"/>
    <property type="resolution" value="2.00 A"/>
    <property type="chains" value="A=109-667"/>
</dbReference>
<dbReference type="PDB" id="1QRC">
    <property type="method" value="X-ray"/>
    <property type="resolution" value="2.50 A"/>
    <property type="chains" value="A=109-667"/>
</dbReference>
<dbReference type="PDB" id="1TSP">
    <property type="method" value="X-ray"/>
    <property type="resolution" value="2.00 A"/>
    <property type="chains" value="A=109-667"/>
</dbReference>
<dbReference type="PDB" id="1TYU">
    <property type="method" value="X-ray"/>
    <property type="resolution" value="1.80 A"/>
    <property type="chains" value="A=114-667"/>
</dbReference>
<dbReference type="PDB" id="1TYV">
    <property type="method" value="X-ray"/>
    <property type="resolution" value="1.80 A"/>
    <property type="chains" value="A=114-667"/>
</dbReference>
<dbReference type="PDB" id="1TYW">
    <property type="method" value="X-ray"/>
    <property type="resolution" value="1.80 A"/>
    <property type="chains" value="A=114-667"/>
</dbReference>
<dbReference type="PDB" id="1TYX">
    <property type="method" value="X-ray"/>
    <property type="resolution" value="1.80 A"/>
    <property type="chains" value="A=114-667"/>
</dbReference>
<dbReference type="PDB" id="2VFM">
    <property type="method" value="X-ray"/>
    <property type="resolution" value="1.50 A"/>
    <property type="chains" value="A=110-667"/>
</dbReference>
<dbReference type="PDB" id="2VFN">
    <property type="method" value="X-ray"/>
    <property type="resolution" value="1.50 A"/>
    <property type="chains" value="A=110-667"/>
</dbReference>
<dbReference type="PDB" id="2VFO">
    <property type="method" value="X-ray"/>
    <property type="resolution" value="1.50 A"/>
    <property type="chains" value="A=110-667"/>
</dbReference>
<dbReference type="PDB" id="2VFP">
    <property type="method" value="X-ray"/>
    <property type="resolution" value="1.55 A"/>
    <property type="chains" value="A=110-667"/>
</dbReference>
<dbReference type="PDB" id="2VFQ">
    <property type="method" value="X-ray"/>
    <property type="resolution" value="1.55 A"/>
    <property type="chains" value="A=110-667"/>
</dbReference>
<dbReference type="PDB" id="2VKY">
    <property type="method" value="X-ray"/>
    <property type="resolution" value="2.05 A"/>
    <property type="chains" value="B=2-124"/>
</dbReference>
<dbReference type="PDB" id="2VNL">
    <property type="method" value="X-ray"/>
    <property type="resolution" value="1.80 A"/>
    <property type="chains" value="A=2-122"/>
</dbReference>
<dbReference type="PDB" id="2XC1">
    <property type="method" value="X-ray"/>
    <property type="resolution" value="1.65 A"/>
    <property type="chains" value="A/B/C=2-667"/>
</dbReference>
<dbReference type="PDB" id="3TH0">
    <property type="method" value="X-ray"/>
    <property type="resolution" value="1.75 A"/>
    <property type="chains" value="A=109-667"/>
</dbReference>
<dbReference type="PDB" id="5GAI">
    <property type="method" value="EM"/>
    <property type="resolution" value="10.50 A"/>
    <property type="chains" value="0/Y/Z=6-667"/>
</dbReference>
<dbReference type="PDB" id="8EAN">
    <property type="method" value="EM"/>
    <property type="resolution" value="3.70 A"/>
    <property type="chains" value="0/Y/Z=6-667"/>
</dbReference>
<dbReference type="PDB" id="8EB7">
    <property type="method" value="EM"/>
    <property type="resolution" value="3.80 A"/>
    <property type="chains" value="0/A/B/C/D/F/X/Y/Z/a/b/c/d/e/f/g/h/i=6-116"/>
</dbReference>
<dbReference type="PDB" id="8TVR">
    <property type="method" value="EM"/>
    <property type="resolution" value="2.80 A"/>
    <property type="chains" value="A/B/C/D/E/F/H/I/J/L/M/N/P/Q/R/V/W/X=1-667"/>
</dbReference>
<dbReference type="PDB" id="8U10">
    <property type="method" value="EM"/>
    <property type="resolution" value="3.20 A"/>
    <property type="chains" value="10/11/12/13/14/15/16/17/18/19/20/21/22/23/24/7/8/9=1-667"/>
</dbReference>
<dbReference type="PDB" id="8U11">
    <property type="method" value="EM"/>
    <property type="resolution" value="3.10 A"/>
    <property type="chains" value="10/11/12/13/14/15/16/17/18/19/20/21/22/23/24/7/8/9=1-667"/>
</dbReference>
<dbReference type="PDB" id="8U1O">
    <property type="method" value="EM"/>
    <property type="resolution" value="3.40 A"/>
    <property type="chains" value="o/p/q=1-667"/>
</dbReference>
<dbReference type="PDBsum" id="1CLW"/>
<dbReference type="PDBsum" id="1LKT"/>
<dbReference type="PDBsum" id="1QA1"/>
<dbReference type="PDBsum" id="1QA2"/>
<dbReference type="PDBsum" id="1QA3"/>
<dbReference type="PDBsum" id="1QQ1"/>
<dbReference type="PDBsum" id="1QRB"/>
<dbReference type="PDBsum" id="1QRC"/>
<dbReference type="PDBsum" id="1TSP"/>
<dbReference type="PDBsum" id="1TYU"/>
<dbReference type="PDBsum" id="1TYV"/>
<dbReference type="PDBsum" id="1TYW"/>
<dbReference type="PDBsum" id="1TYX"/>
<dbReference type="PDBsum" id="2VFM"/>
<dbReference type="PDBsum" id="2VFN"/>
<dbReference type="PDBsum" id="2VFO"/>
<dbReference type="PDBsum" id="2VFP"/>
<dbReference type="PDBsum" id="2VFQ"/>
<dbReference type="PDBsum" id="2VKY"/>
<dbReference type="PDBsum" id="2VNL"/>
<dbReference type="PDBsum" id="2XC1"/>
<dbReference type="PDBsum" id="3TH0"/>
<dbReference type="PDBsum" id="5GAI"/>
<dbReference type="PDBsum" id="8EAN"/>
<dbReference type="PDBsum" id="8EB7"/>
<dbReference type="PDBsum" id="8TVR"/>
<dbReference type="PDBsum" id="8U10"/>
<dbReference type="PDBsum" id="8U11"/>
<dbReference type="PDBsum" id="8U1O"/>
<dbReference type="EMDB" id="EMD-41649"/>
<dbReference type="EMDB" id="EMD-41791"/>
<dbReference type="EMDB" id="EMD-41792"/>
<dbReference type="EMDB" id="EMD-41819"/>
<dbReference type="EMDB" id="EMD-8005"/>
<dbReference type="SMR" id="P12528"/>
<dbReference type="DrugBank" id="DB02590">
    <property type="generic name" value="Abequose"/>
</dbReference>
<dbReference type="DrugBank" id="DB02379">
    <property type="generic name" value="Beta-D-Glucose"/>
</dbReference>
<dbReference type="DrugBank" id="DB04028">
    <property type="generic name" value="Tyvelose"/>
</dbReference>
<dbReference type="CAZy" id="GH90">
    <property type="family name" value="Glycoside Hydrolase Family 90"/>
</dbReference>
<dbReference type="UniLectin" id="P12528"/>
<dbReference type="GeneID" id="1262799"/>
<dbReference type="KEGG" id="vg:1262799"/>
<dbReference type="OrthoDB" id="521at10239"/>
<dbReference type="EvolutionaryTrace" id="P12528"/>
<dbReference type="Proteomes" id="UP000001795">
    <property type="component" value="Segment"/>
</dbReference>
<dbReference type="Proteomes" id="UP000007960">
    <property type="component" value="Segment"/>
</dbReference>
<dbReference type="GO" id="GO:0098024">
    <property type="term" value="C:virus tail, fiber"/>
    <property type="evidence" value="ECO:0000314"/>
    <property type="project" value="UniProtKB"/>
</dbReference>
<dbReference type="GO" id="GO:0052775">
    <property type="term" value="F:endo-1,3-alpha-L-rhamnosidase activity"/>
    <property type="evidence" value="ECO:0000314"/>
    <property type="project" value="UniProtKB"/>
</dbReference>
<dbReference type="GO" id="GO:0098671">
    <property type="term" value="P:adhesion receptor-mediated virion attachment to host cell"/>
    <property type="evidence" value="ECO:0007669"/>
    <property type="project" value="UniProtKB-KW"/>
</dbReference>
<dbReference type="GO" id="GO:0044409">
    <property type="term" value="P:symbiont entry into host"/>
    <property type="evidence" value="ECO:0000314"/>
    <property type="project" value="UniProtKB"/>
</dbReference>
<dbReference type="GO" id="GO:0098994">
    <property type="term" value="P:symbiont entry into host cell via disruption of host cell envelope"/>
    <property type="evidence" value="ECO:0007669"/>
    <property type="project" value="UniProtKB-KW"/>
</dbReference>
<dbReference type="GO" id="GO:0098995">
    <property type="term" value="P:symbiont entry into host cell via disruption of host cell envelope lipopolysaccharide"/>
    <property type="evidence" value="ECO:0007669"/>
    <property type="project" value="UniProtKB-KW"/>
</dbReference>
<dbReference type="GO" id="GO:0019062">
    <property type="term" value="P:virion attachment to host cell"/>
    <property type="evidence" value="ECO:0000314"/>
    <property type="project" value="UniProtKB"/>
</dbReference>
<dbReference type="FunFam" id="2.160.20.20:FF:000002">
    <property type="entry name" value="Tail spike protein"/>
    <property type="match status" value="1"/>
</dbReference>
<dbReference type="FunFam" id="2.170.14.10:FF:000001">
    <property type="entry name" value="Tail spike protein"/>
    <property type="match status" value="1"/>
</dbReference>
<dbReference type="Gene3D" id="2.160.20.20">
    <property type="match status" value="1"/>
</dbReference>
<dbReference type="Gene3D" id="2.170.14.10">
    <property type="entry name" value="Phage P22 tailspike-like, N-terminal domain"/>
    <property type="match status" value="1"/>
</dbReference>
<dbReference type="InterPro" id="IPR012332">
    <property type="entry name" value="Autotransporter_pectin_lyase_C"/>
</dbReference>
<dbReference type="InterPro" id="IPR015331">
    <property type="entry name" value="P22_tailspike_C"/>
</dbReference>
<dbReference type="InterPro" id="IPR009093">
    <property type="entry name" value="P22_tailspike_N"/>
</dbReference>
<dbReference type="InterPro" id="IPR036730">
    <property type="entry name" value="P22_tailspike_N_sf"/>
</dbReference>
<dbReference type="InterPro" id="IPR011050">
    <property type="entry name" value="Pectin_lyase_fold/virulence"/>
</dbReference>
<dbReference type="Pfam" id="PF09008">
    <property type="entry name" value="Head_binding"/>
    <property type="match status" value="1"/>
</dbReference>
<dbReference type="Pfam" id="PF09251">
    <property type="entry name" value="PhageP22-tail"/>
    <property type="match status" value="1"/>
</dbReference>
<dbReference type="SUPFAM" id="SSF51327">
    <property type="entry name" value="Head-binding domain of phage P22 tailspike protein"/>
    <property type="match status" value="1"/>
</dbReference>
<dbReference type="SUPFAM" id="SSF51126">
    <property type="entry name" value="Pectin lyase-like"/>
    <property type="match status" value="1"/>
</dbReference>
<reference key="1">
    <citation type="journal article" date="1982" name="Biochemistry">
        <title>Phage P22 tail protein: gene and amino acid sequence.</title>
        <authorList>
            <person name="Sauer R.T."/>
            <person name="Krovatin W."/>
            <person name="Poteete A.R."/>
            <person name="Berget P.B."/>
        </authorList>
    </citation>
    <scope>NUCLEOTIDE SEQUENCE [GENOMIC DNA]</scope>
    <scope>PROTEIN SEQUENCE OF 1-9 AND 659-667</scope>
</reference>
<reference key="2">
    <citation type="journal article" date="2000" name="J. Bacteriol.">
        <title>Sequence of the genome of Salmonella bacteriophage P22.</title>
        <authorList>
            <person name="Vander Byl C.S."/>
            <person name="Kropinski A.M.B."/>
        </authorList>
    </citation>
    <scope>NUCLEOTIDE SEQUENCE [LARGE SCALE GENOMIC DNA]</scope>
</reference>
<reference key="3">
    <citation type="journal article" date="2003" name="J. Bacteriol.">
        <title>Corrected sequence of the bacteriophage P22 genome.</title>
        <authorList>
            <person name="Pedulla M.L."/>
            <person name="Ford M.E."/>
            <person name="Karthikeyan T."/>
            <person name="Houtz J.M."/>
            <person name="Hendrix R.W."/>
            <person name="Hatfull G.F."/>
            <person name="Poteete A.R."/>
            <person name="Gilcrease E.B."/>
            <person name="Winn-Stapley D.A."/>
            <person name="Casjens S.R."/>
        </authorList>
    </citation>
    <scope>NUCLEOTIDE SEQUENCE [LARGE SCALE GENOMIC DNA]</scope>
</reference>
<reference key="4">
    <citation type="journal article" date="1979" name="J. Gen. Virol.">
        <title>Salmonella phage glycanases: substrate specificity of the phage P22 endo-rhamnosidase.</title>
        <authorList>
            <person name="Eriksson U."/>
            <person name="Svenson S.B."/>
            <person name="Loenngren J."/>
            <person name="Lindberg A.A."/>
        </authorList>
    </citation>
    <scope>CATALYTIC ACTIVITY</scope>
</reference>
<reference key="5">
    <citation type="journal article" date="1996" name="Biophys. J.">
        <title>Interactions of phage P22 tails with their cellular receptor, Salmonella O-antigen polysaccharide.</title>
        <authorList>
            <person name="Baxa U."/>
            <person name="Steinbacher S."/>
            <person name="Miller S."/>
            <person name="Weintraub A."/>
            <person name="Huber R."/>
            <person name="Seckler R."/>
        </authorList>
    </citation>
    <scope>ACTIVE SITE</scope>
    <scope>MUTAGENESIS OF GLU-360; ASP-393 AND ASP-396</scope>
    <scope>CATALYTIC ACTIVITY</scope>
</reference>
<reference key="6">
    <citation type="journal article" date="2003" name="J. Bacteriol.">
        <title>Homotrimeric, beta-stranded viral adhesins and tail proteins.</title>
        <authorList>
            <person name="Weigele P.R."/>
            <person name="Scanlon E."/>
            <person name="King J."/>
        </authorList>
    </citation>
    <scope>FUNCTION</scope>
</reference>
<reference key="7">
    <citation type="journal article" date="2010" name="J. Biol. Chem.">
        <title>Tailspike interactions with lipopolysaccharide effect DNA ejection from phage P22 particles in vitro.</title>
        <authorList>
            <person name="Andres D."/>
            <person name="Hanke C."/>
            <person name="Baxa U."/>
            <person name="Seul A."/>
            <person name="Barbirz S."/>
            <person name="Seckler R."/>
        </authorList>
    </citation>
    <scope>FUNCTION</scope>
    <scope>INTERACTION WITH HOST LIPOPOLYSACCHARIDES</scope>
</reference>
<reference key="8">
    <citation type="journal article" date="1994" name="Science">
        <title>Crystal structure of P22 tailspike protein: interdigitated subunits in a thermostable trimer.</title>
        <authorList>
            <person name="Steinbacher S."/>
            <person name="Seckler R."/>
            <person name="Miller S."/>
            <person name="Steipe B."/>
            <person name="Huber R."/>
            <person name="Reinemer P."/>
        </authorList>
    </citation>
    <scope>X-RAY CRYSTALLOGRAPHY (2.0 ANGSTROMS) OF 110-667</scope>
</reference>
<reference key="9">
    <citation type="journal article" date="1996" name="Proc. Natl. Acad. Sci. U.S.A.">
        <title>Crystal structure of phage P22 tailspike protein complexed with Salmonella sp. O-antigen receptors.</title>
        <authorList>
            <person name="Steinbacher S."/>
            <person name="Baxa U."/>
            <person name="Miller S."/>
            <person name="Weintraub A."/>
            <person name="Seckler R."/>
            <person name="Huber R."/>
        </authorList>
    </citation>
    <scope>X-RAY CRYSTALLOGRAPHY (1.8 ANGSTROMS) OF 110-667 IN COMPLEX WITH O-ANTIGEN</scope>
</reference>
<reference key="10">
    <citation type="journal article" date="1997" name="J. Mol. Biol.">
        <title>Phage P22 tailspike protein: crystal structure of the head-binding domain at 2.3 A, fully refined structure of the endorhamnosidase at 1.56-A resolution, and the molecular basis of O-antigen recognition and cleavage.</title>
        <authorList>
            <person name="Steinbacher S."/>
            <person name="Miller S."/>
            <person name="Baxa U."/>
            <person name="Budisa N."/>
            <person name="Weintraub A."/>
            <person name="Seckler R."/>
            <person name="Huber R."/>
        </authorList>
    </citation>
    <scope>X-RAY CRYSTALLOGRAPHY (2.6 ANGSTROMS) OF 6-109</scope>
</reference>
<reference key="11">
    <citation type="journal article" date="1999" name="J. Mol. Biol.">
        <title>Mutations improving the folding of phage P22 tailspike protein affect its receptor binding activity.</title>
        <authorList>
            <person name="Baxa U."/>
            <person name="Steinbacher S."/>
            <person name="Weintraub A."/>
            <person name="Huber R."/>
            <person name="Seckler R."/>
        </authorList>
    </citation>
    <scope>X-RAY CRYSTALLOGRAPHY (2.0 ANGSTROMS) OF 114-667</scope>
</reference>
<reference key="12">
    <citation type="journal article" date="2000" name="Proteins">
        <title>Plasticity and steric strain in a parallel beta-helix: rational mutations in the P22 tailspike protein.</title>
        <authorList>
            <person name="Schuler B."/>
            <person name="Furst F."/>
            <person name="Osterroth F."/>
            <person name="Steinbacher S."/>
            <person name="Huber R."/>
            <person name="Seckler R."/>
        </authorList>
    </citation>
    <scope>X-RAY CRYSTALLOGRAPHY (1.8 ANGSTROMS) OF 109-667</scope>
</reference>
<reference evidence="10 11 12 13" key="13">
    <citation type="journal article" date="2023" name="J. Mol. Biol.">
        <title>Molecular Architecture of Salmonella Typhimurium Virus P22 Genome Ejection Machinery.</title>
        <authorList>
            <person name="Iglesias S.M."/>
            <person name="Lokareddy R.K."/>
            <person name="Yang R."/>
            <person name="Li F."/>
            <person name="Yeggoni D.P."/>
            <person name="David Hou C.F."/>
            <person name="Leroux M.N."/>
            <person name="Cortines J.R."/>
            <person name="Leavitt J.C."/>
            <person name="Bird M."/>
            <person name="Casjens S.R."/>
            <person name="White S."/>
            <person name="Teschke C.M."/>
            <person name="Cingolani G."/>
        </authorList>
    </citation>
    <scope>STRUCTURE BY ELECTRON MICROSCOPY (2.80 ANGSTROMS)</scope>
    <scope>SUBCELLULAR LOCATION</scope>
    <scope>SUBUNIT</scope>
    <scope>INTERACTION WITH THE TAIL HUB PROTEIN GP10</scope>
    <scope>FUNCTION</scope>
</reference>
<evidence type="ECO:0000269" key="1">
    <source>
    </source>
</evidence>
<evidence type="ECO:0000269" key="2">
    <source>
    </source>
</evidence>
<evidence type="ECO:0000269" key="3">
    <source>
    </source>
</evidence>
<evidence type="ECO:0000269" key="4">
    <source>
    </source>
</evidence>
<evidence type="ECO:0000269" key="5">
    <source>
    </source>
</evidence>
<evidence type="ECO:0000269" key="6">
    <source>
    </source>
</evidence>
<evidence type="ECO:0000269" key="7">
    <source>
    </source>
</evidence>
<evidence type="ECO:0000269" key="8">
    <source>
    </source>
</evidence>
<evidence type="ECO:0000305" key="9"/>
<evidence type="ECO:0007744" key="10">
    <source>
        <dbReference type="PDB" id="8TVR"/>
    </source>
</evidence>
<evidence type="ECO:0007744" key="11">
    <source>
        <dbReference type="PDB" id="8U10"/>
    </source>
</evidence>
<evidence type="ECO:0007744" key="12">
    <source>
        <dbReference type="PDB" id="8U11"/>
    </source>
</evidence>
<evidence type="ECO:0007744" key="13">
    <source>
        <dbReference type="PDB" id="8U1O"/>
    </source>
</evidence>
<evidence type="ECO:0007829" key="14">
    <source>
        <dbReference type="PDB" id="1TSP"/>
    </source>
</evidence>
<evidence type="ECO:0007829" key="15">
    <source>
        <dbReference type="PDB" id="2VFM"/>
    </source>
</evidence>
<evidence type="ECO:0007829" key="16">
    <source>
        <dbReference type="PDB" id="2VFO"/>
    </source>
</evidence>
<evidence type="ECO:0007829" key="17">
    <source>
        <dbReference type="PDB" id="2XC1"/>
    </source>
</evidence>
<evidence type="ECO:0007829" key="18">
    <source>
        <dbReference type="PDB" id="8TVR"/>
    </source>
</evidence>
<evidence type="ECO:0007829" key="19">
    <source>
        <dbReference type="PDB" id="8U1O"/>
    </source>
</evidence>
<protein>
    <recommendedName>
        <fullName evidence="9">Tail spike protein</fullName>
        <shortName>TSP</shortName>
    </recommendedName>
    <alternativeName>
        <fullName evidence="9">Endo-1,3-alpha-L-rhamnosidase</fullName>
        <ecNumber evidence="4 7">3.2.1.-</ecNumber>
    </alternativeName>
    <alternativeName>
        <fullName evidence="9">Endorhamnosidase</fullName>
    </alternativeName>
    <alternativeName>
        <fullName evidence="9">Gene product 9</fullName>
        <shortName>gp9</shortName>
    </alternativeName>
</protein>
<name>FIBER_BPP22</name>
<gene>
    <name type="primary">9</name>
</gene>
<sequence>MTDITANVVVSNPRPIFTESRSFKAVANGKIYIGQIDTDPVNPANQIPVYIENEDGSHVQITQPLIINAAGKIVYNGQLVKIVTVQGHSMAIYDANGSQVDYIANVLKYDPDQYSIEADKKFKYSVKLSDYPTLQDAASAAVDGLLIDRDYNFYGGETVDFGGKVLTIECKAKFIGDGNLIFTKLGKGSRIAGVFMESTTTPWVIKPWTDDNQWLTDAAAVVATLKQSKTDGYQPTVSDYVKFPGIETLLPPNAKGQNITSTLEIRECIGVEVHRASGLMAGFLFRGCHFCKMVDANNPSGGKDGIITFENLSGDWGKGNYVIGGRTSYGSVSSAQFLRNNGGFERDGGVIGFTSYRAGESGVKTWQGTVGSTTSRNYNLQFRDSVVIYPVWDGFDLGADTDMNPELDRPGDYPITQYPLHQLPLNHLIDNLLVRGALGVGFGMDGKGMYVSNITVEDCAGSGAYLLTHESVFTNIAIIDTNTKDFQANQIYISGACRVNGLRLIGIRSTDGQGLTIDAPNSTVSGITGMVDPSRINVANLAEEGLGNIRANSFGYDSAAIKLRIHKLSKTLDSGALYSHINGGAGSGSAYTQLTAISGSTPDAVSLKVNHKDCRGAEIPFVPDIASDDFIKDSSCFLPYWENNSTSLKALVKKPNGELVRLTLATL</sequence>
<feature type="initiator methionine" description="Removed" evidence="5">
    <location>
        <position position="1"/>
    </location>
</feature>
<feature type="chain" id="PRO_0000077757" description="Tail spike protein">
    <location>
        <begin position="2"/>
        <end position="667"/>
    </location>
</feature>
<feature type="active site" evidence="7">
    <location>
        <position position="360"/>
    </location>
</feature>
<feature type="active site" evidence="7">
    <location>
        <position position="393"/>
    </location>
</feature>
<feature type="active site" evidence="7">
    <location>
        <position position="396"/>
    </location>
</feature>
<feature type="mutagenesis site" description="Complete loss of hydrolysis of O-antigen oligosaccharides." evidence="7">
    <original>E</original>
    <variation>Q</variation>
    <location>
        <position position="360"/>
    </location>
</feature>
<feature type="mutagenesis site" description="Complete loss of hydrolysis of O-antigen oligosaccharides." evidence="7">
    <original>D</original>
    <variation>N</variation>
    <location>
        <position position="393"/>
    </location>
</feature>
<feature type="mutagenesis site" description="Complete loss of hydrolysis of O-antigen oligosaccharides." evidence="7">
    <original>D</original>
    <variation>N</variation>
    <location>
        <position position="396"/>
    </location>
</feature>
<feature type="strand" evidence="18">
    <location>
        <begin position="7"/>
        <end position="9"/>
    </location>
</feature>
<feature type="strand" evidence="17">
    <location>
        <begin position="20"/>
        <end position="23"/>
    </location>
</feature>
<feature type="strand" evidence="17">
    <location>
        <begin position="30"/>
        <end position="35"/>
    </location>
</feature>
<feature type="helix" evidence="17">
    <location>
        <begin position="43"/>
        <end position="45"/>
    </location>
</feature>
<feature type="strand" evidence="17">
    <location>
        <begin position="49"/>
        <end position="52"/>
    </location>
</feature>
<feature type="strand" evidence="18">
    <location>
        <begin position="54"/>
        <end position="56"/>
    </location>
</feature>
<feature type="strand" evidence="17">
    <location>
        <begin position="58"/>
        <end position="61"/>
    </location>
</feature>
<feature type="strand" evidence="17">
    <location>
        <begin position="63"/>
        <end position="67"/>
    </location>
</feature>
<feature type="strand" evidence="17">
    <location>
        <begin position="73"/>
        <end position="75"/>
    </location>
</feature>
<feature type="strand" evidence="17">
    <location>
        <begin position="82"/>
        <end position="86"/>
    </location>
</feature>
<feature type="strand" evidence="17">
    <location>
        <begin position="89"/>
        <end position="93"/>
    </location>
</feature>
<feature type="strand" evidence="17">
    <location>
        <begin position="99"/>
        <end position="104"/>
    </location>
</feature>
<feature type="helix" evidence="17">
    <location>
        <begin position="106"/>
        <end position="108"/>
    </location>
</feature>
<feature type="helix" evidence="15">
    <location>
        <begin position="114"/>
        <end position="121"/>
    </location>
</feature>
<feature type="strand" evidence="15">
    <location>
        <begin position="125"/>
        <end position="127"/>
    </location>
</feature>
<feature type="helix" evidence="15">
    <location>
        <begin position="128"/>
        <end position="130"/>
    </location>
</feature>
<feature type="strand" evidence="16">
    <location>
        <begin position="131"/>
        <end position="133"/>
    </location>
</feature>
<feature type="helix" evidence="15">
    <location>
        <begin position="134"/>
        <end position="140"/>
    </location>
</feature>
<feature type="strand" evidence="15">
    <location>
        <begin position="142"/>
        <end position="147"/>
    </location>
</feature>
<feature type="strand" evidence="19">
    <location>
        <begin position="151"/>
        <end position="154"/>
    </location>
</feature>
<feature type="strand" evidence="15">
    <location>
        <begin position="158"/>
        <end position="160"/>
    </location>
</feature>
<feature type="strand" evidence="15">
    <location>
        <begin position="167"/>
        <end position="170"/>
    </location>
</feature>
<feature type="strand" evidence="17">
    <location>
        <begin position="172"/>
        <end position="175"/>
    </location>
</feature>
<feature type="strand" evidence="15">
    <location>
        <begin position="177"/>
        <end position="183"/>
    </location>
</feature>
<feature type="strand" evidence="15">
    <location>
        <begin position="190"/>
        <end position="193"/>
    </location>
</feature>
<feature type="strand" evidence="15">
    <location>
        <begin position="195"/>
        <end position="197"/>
    </location>
</feature>
<feature type="strand" evidence="15">
    <location>
        <begin position="203"/>
        <end position="205"/>
    </location>
</feature>
<feature type="helix" evidence="15">
    <location>
        <begin position="218"/>
        <end position="222"/>
    </location>
</feature>
<feature type="strand" evidence="19">
    <location>
        <begin position="225"/>
        <end position="227"/>
    </location>
</feature>
<feature type="strand" evidence="15">
    <location>
        <begin position="229"/>
        <end position="233"/>
    </location>
</feature>
<feature type="helix" evidence="15">
    <location>
        <begin position="238"/>
        <end position="242"/>
    </location>
</feature>
<feature type="turn" evidence="17">
    <location>
        <begin position="243"/>
        <end position="245"/>
    </location>
</feature>
<feature type="helix" evidence="15">
    <location>
        <begin position="246"/>
        <end position="249"/>
    </location>
</feature>
<feature type="helix" evidence="15">
    <location>
        <begin position="252"/>
        <end position="254"/>
    </location>
</feature>
<feature type="strand" evidence="15">
    <location>
        <begin position="261"/>
        <end position="267"/>
    </location>
</feature>
<feature type="strand" evidence="15">
    <location>
        <begin position="272"/>
        <end position="275"/>
    </location>
</feature>
<feature type="strand" evidence="15">
    <location>
        <begin position="277"/>
        <end position="287"/>
    </location>
</feature>
<feature type="strand" evidence="15">
    <location>
        <begin position="292"/>
        <end position="295"/>
    </location>
</feature>
<feature type="strand" evidence="15">
    <location>
        <begin position="297"/>
        <end position="301"/>
    </location>
</feature>
<feature type="strand" evidence="15">
    <location>
        <begin position="306"/>
        <end position="310"/>
    </location>
</feature>
<feature type="strand" evidence="15">
    <location>
        <begin position="312"/>
        <end position="315"/>
    </location>
</feature>
<feature type="strand" evidence="15">
    <location>
        <begin position="321"/>
        <end position="324"/>
    </location>
</feature>
<feature type="strand" evidence="15">
    <location>
        <begin position="326"/>
        <end position="329"/>
    </location>
</feature>
<feature type="strand" evidence="15">
    <location>
        <begin position="334"/>
        <end position="341"/>
    </location>
</feature>
<feature type="turn" evidence="15">
    <location>
        <begin position="343"/>
        <end position="346"/>
    </location>
</feature>
<feature type="strand" evidence="15">
    <location>
        <begin position="349"/>
        <end position="352"/>
    </location>
</feature>
<feature type="strand" evidence="15">
    <location>
        <begin position="354"/>
        <end position="357"/>
    </location>
</feature>
<feature type="strand" evidence="15">
    <location>
        <begin position="362"/>
        <end position="365"/>
    </location>
</feature>
<feature type="strand" evidence="15">
    <location>
        <begin position="368"/>
        <end position="370"/>
    </location>
</feature>
<feature type="strand" evidence="14">
    <location>
        <begin position="377"/>
        <end position="379"/>
    </location>
</feature>
<feature type="strand" evidence="15">
    <location>
        <begin position="381"/>
        <end position="389"/>
    </location>
</feature>
<feature type="strand" evidence="15">
    <location>
        <begin position="394"/>
        <end position="397"/>
    </location>
</feature>
<feature type="strand" evidence="15">
    <location>
        <begin position="402"/>
        <end position="404"/>
    </location>
</feature>
<feature type="turn" evidence="15">
    <location>
        <begin position="415"/>
        <end position="417"/>
    </location>
</feature>
<feature type="turn" evidence="19">
    <location>
        <begin position="419"/>
        <end position="421"/>
    </location>
</feature>
<feature type="strand" evidence="15">
    <location>
        <begin position="428"/>
        <end position="435"/>
    </location>
</feature>
<feature type="strand" evidence="15">
    <location>
        <begin position="438"/>
        <end position="448"/>
    </location>
</feature>
<feature type="strand" evidence="15">
    <location>
        <begin position="450"/>
        <end position="458"/>
    </location>
</feature>
<feature type="strand" evidence="15">
    <location>
        <begin position="460"/>
        <end position="470"/>
    </location>
</feature>
<feature type="strand" evidence="15">
    <location>
        <begin position="472"/>
        <end position="480"/>
    </location>
</feature>
<feature type="strand" evidence="15">
    <location>
        <begin position="490"/>
        <end position="493"/>
    </location>
</feature>
<feature type="strand" evidence="15">
    <location>
        <begin position="498"/>
        <end position="504"/>
    </location>
</feature>
<feature type="strand" evidence="15">
    <location>
        <begin position="516"/>
        <end position="529"/>
    </location>
</feature>
<feature type="helix" evidence="15">
    <location>
        <begin position="533"/>
        <end position="535"/>
    </location>
</feature>
<feature type="strand" evidence="15">
    <location>
        <begin position="536"/>
        <end position="541"/>
    </location>
</feature>
<feature type="strand" evidence="17">
    <location>
        <begin position="548"/>
        <end position="553"/>
    </location>
</feature>
<feature type="strand" evidence="15">
    <location>
        <begin position="555"/>
        <end position="563"/>
    </location>
</feature>
<feature type="turn" evidence="15">
    <location>
        <begin position="566"/>
        <end position="568"/>
    </location>
</feature>
<feature type="strand" evidence="15">
    <location>
        <begin position="570"/>
        <end position="572"/>
    </location>
</feature>
<feature type="strand" evidence="15">
    <location>
        <begin position="574"/>
        <end position="581"/>
    </location>
</feature>
<feature type="strand" evidence="15">
    <location>
        <begin position="590"/>
        <end position="598"/>
    </location>
</feature>
<feature type="strand" evidence="15">
    <location>
        <begin position="601"/>
        <end position="610"/>
    </location>
</feature>
<feature type="helix" evidence="15">
    <location>
        <begin position="611"/>
        <end position="613"/>
    </location>
</feature>
<feature type="strand" evidence="15">
    <location>
        <begin position="616"/>
        <end position="618"/>
    </location>
</feature>
<feature type="strand" evidence="15">
    <location>
        <begin position="622"/>
        <end position="624"/>
    </location>
</feature>
<feature type="helix" evidence="15">
    <location>
        <begin position="628"/>
        <end position="630"/>
    </location>
</feature>
<feature type="strand" evidence="15">
    <location>
        <begin position="633"/>
        <end position="642"/>
    </location>
</feature>
<feature type="turn" evidence="15">
    <location>
        <begin position="643"/>
        <end position="646"/>
    </location>
</feature>
<feature type="strand" evidence="15">
    <location>
        <begin position="647"/>
        <end position="653"/>
    </location>
</feature>
<feature type="strand" evidence="15">
    <location>
        <begin position="659"/>
        <end position="665"/>
    </location>
</feature>
<proteinExistence type="evidence at protein level"/>
<comment type="function">
    <text evidence="1 2 3">Structural component of the short non-contractile tail (PubMed:37952769). The tail comprises six spikes that mediate primary attachment to the host cell lipopolysaccharides (LPS) and display endorhamnosidase enzymatic activity, hydrolyzing the alpha-1,3-O-glycosidic linkage between rhamnose and galactose of the O-antigen polysaccharide. Digestion of the LPS brings the capsid near the cell outer membrane.</text>
</comment>
<comment type="subunit">
    <text evidence="2 3 6 8">Homotrimer (PubMed:8855221, PubMed:9135118). Interacts with the host O-antigen lipopolysaccharides; this interaction induces cleavage of host O-antigen (PubMed:20817910, PubMed:8855221). Interacts with tail hub protein gp10; this interaction anchors 6 fibers onto the tail hub hexamer (PubMed:37952769).</text>
</comment>
<comment type="subcellular location">
    <subcellularLocation>
        <location evidence="8">Virion</location>
    </subcellularLocation>
</comment>
<comment type="domain">
    <text>The interdigitation of the polypeptide chains at the C-termini is important to protrimer formation in the folding pathway and to thermostability of the mature protein.</text>
</comment>
<comment type="similarity">
    <text evidence="9">Belongs to the P22likevirus tail fiber protein family.</text>
</comment>
<organismHost>
    <name type="scientific">Salmonella typhimurium</name>
    <dbReference type="NCBI Taxonomy" id="90371"/>
</organismHost>